<dbReference type="EMBL" id="BC072248">
    <property type="protein sequence ID" value="AAH72248.1"/>
    <property type="molecule type" value="mRNA"/>
</dbReference>
<dbReference type="RefSeq" id="NP_001085197.1">
    <property type="nucleotide sequence ID" value="NM_001091728.1"/>
</dbReference>
<dbReference type="BioGRID" id="101654">
    <property type="interactions" value="1"/>
</dbReference>
<dbReference type="DNASU" id="432288"/>
<dbReference type="GeneID" id="432288"/>
<dbReference type="KEGG" id="xla:432288"/>
<dbReference type="AGR" id="Xenbase:XB-GENE-1011470"/>
<dbReference type="CTD" id="432288"/>
<dbReference type="Xenbase" id="XB-GENE-1011470">
    <property type="gene designation" value="pex16.S"/>
</dbReference>
<dbReference type="OrthoDB" id="2021143at2759"/>
<dbReference type="Proteomes" id="UP000186698">
    <property type="component" value="Chromosome 4S"/>
</dbReference>
<dbReference type="Bgee" id="432288">
    <property type="expression patterns" value="Expressed in oocyte and 19 other cell types or tissues"/>
</dbReference>
<dbReference type="GO" id="GO:0005778">
    <property type="term" value="C:peroxisomal membrane"/>
    <property type="evidence" value="ECO:0000318"/>
    <property type="project" value="GO_Central"/>
</dbReference>
<dbReference type="GO" id="GO:0007031">
    <property type="term" value="P:peroxisome organization"/>
    <property type="evidence" value="ECO:0000318"/>
    <property type="project" value="GO_Central"/>
</dbReference>
<dbReference type="InterPro" id="IPR013919">
    <property type="entry name" value="Pex16"/>
</dbReference>
<dbReference type="PANTHER" id="PTHR13299">
    <property type="entry name" value="PEROXISOMAL MEMBRANE PROTEIN PEX16"/>
    <property type="match status" value="1"/>
</dbReference>
<dbReference type="PANTHER" id="PTHR13299:SF0">
    <property type="entry name" value="PEROXISOMAL MEMBRANE PROTEIN PEX16"/>
    <property type="match status" value="1"/>
</dbReference>
<dbReference type="Pfam" id="PF08610">
    <property type="entry name" value="Pex16"/>
    <property type="match status" value="1"/>
</dbReference>
<feature type="chain" id="PRO_0000366963" description="Peroxisomal membrane protein PEX16">
    <location>
        <begin position="1"/>
        <end position="340"/>
    </location>
</feature>
<feature type="topological domain" description="Cytoplasmic" evidence="2">
    <location>
        <begin position="1"/>
        <end position="89"/>
    </location>
</feature>
<feature type="transmembrane region" description="Helical" evidence="2">
    <location>
        <begin position="90"/>
        <end position="110"/>
    </location>
</feature>
<feature type="topological domain" description="Peroxisomal" evidence="2">
    <location>
        <begin position="111"/>
        <end position="114"/>
    </location>
</feature>
<feature type="transmembrane region" description="Helical" evidence="2">
    <location>
        <begin position="115"/>
        <end position="136"/>
    </location>
</feature>
<feature type="topological domain" description="Cytoplasmic" evidence="2">
    <location>
        <begin position="137"/>
        <end position="340"/>
    </location>
</feature>
<feature type="region of interest" description="Required for peroxisomal location" evidence="1">
    <location>
        <begin position="71"/>
        <end position="86"/>
    </location>
</feature>
<feature type="region of interest" description="Disordered" evidence="3">
    <location>
        <begin position="196"/>
        <end position="215"/>
    </location>
</feature>
<proteinExistence type="evidence at transcript level"/>
<organism>
    <name type="scientific">Xenopus laevis</name>
    <name type="common">African clawed frog</name>
    <dbReference type="NCBI Taxonomy" id="8355"/>
    <lineage>
        <taxon>Eukaryota</taxon>
        <taxon>Metazoa</taxon>
        <taxon>Chordata</taxon>
        <taxon>Craniata</taxon>
        <taxon>Vertebrata</taxon>
        <taxon>Euteleostomi</taxon>
        <taxon>Amphibia</taxon>
        <taxon>Batrachia</taxon>
        <taxon>Anura</taxon>
        <taxon>Pipoidea</taxon>
        <taxon>Pipidae</taxon>
        <taxon>Xenopodinae</taxon>
        <taxon>Xenopus</taxon>
        <taxon>Xenopus</taxon>
    </lineage>
</organism>
<sequence>MAARYWDKLRDLSQKYKEYVIQNPTGATQLESGVRMLSYLIAGRFADSHELSELVYSSSNLLALLNDGILRKELLTPPPTEGSRRRLLTWLGVLESLEVFIEIGAARAWGERSRWAAILIIQLLKACLRIVLLFWYRVGIQSSPPVTPLDREGILNQAEDNSKSSSSCFVGRRSSRAVRSLNDSASSHRRFWRSPQIHEGKQQKNGETENDKEGSELGTLGTLAEAIHILRPITHLLSLAACGQKSWKPWMMAAALDITSISLLSDVRNLSRRERIELRRRMFLLLYYLLRSPFYNNYTETRLLLLLRLLGDYVPGLGLVARPLMDYLPVWQKIYFYNWG</sequence>
<name>PEX16_XENLA</name>
<gene>
    <name type="primary">pex16</name>
</gene>
<reference key="1">
    <citation type="submission" date="2004-06" db="EMBL/GenBank/DDBJ databases">
        <authorList>
            <consortium name="NIH - Xenopus Gene Collection (XGC) project"/>
        </authorList>
    </citation>
    <scope>NUCLEOTIDE SEQUENCE [LARGE SCALE MRNA]</scope>
    <source>
        <tissue>Spleen</tissue>
    </source>
</reference>
<keyword id="KW-0472">Membrane</keyword>
<keyword id="KW-0576">Peroxisome</keyword>
<keyword id="KW-0962">Peroxisome biogenesis</keyword>
<keyword id="KW-1185">Reference proteome</keyword>
<keyword id="KW-0812">Transmembrane</keyword>
<keyword id="KW-1133">Transmembrane helix</keyword>
<accession>Q6INN0</accession>
<evidence type="ECO:0000250" key="1">
    <source>
        <dbReference type="UniProtKB" id="Q9Y5Y5"/>
    </source>
</evidence>
<evidence type="ECO:0000255" key="2"/>
<evidence type="ECO:0000256" key="3">
    <source>
        <dbReference type="SAM" id="MobiDB-lite"/>
    </source>
</evidence>
<evidence type="ECO:0000305" key="4"/>
<comment type="function">
    <text evidence="1">Involved in peroxisome biogenesis.</text>
</comment>
<comment type="subcellular location">
    <subcellularLocation>
        <location evidence="1">Peroxisome membrane</location>
        <topology evidence="1">Multi-pass membrane protein</topology>
    </subcellularLocation>
</comment>
<comment type="similarity">
    <text evidence="4">Belongs to the peroxin-16 family.</text>
</comment>
<protein>
    <recommendedName>
        <fullName>Peroxisomal membrane protein PEX16</fullName>
    </recommendedName>
    <alternativeName>
        <fullName>Peroxin-16</fullName>
    </alternativeName>
    <alternativeName>
        <fullName>Peroxisomal biogenesis factor 16</fullName>
    </alternativeName>
</protein>